<accession>O10337</accession>
<organism>
    <name type="scientific">Orgyia pseudotsugata multicapsid polyhedrosis virus</name>
    <name type="common">OpMNPV</name>
    <dbReference type="NCBI Taxonomy" id="262177"/>
    <lineage>
        <taxon>Viruses</taxon>
        <taxon>Viruses incertae sedis</taxon>
        <taxon>Naldaviricetes</taxon>
        <taxon>Lefavirales</taxon>
        <taxon>Baculoviridae</taxon>
        <taxon>Alphabaculovirus</taxon>
        <taxon>Alphabaculovirus orpseudotsugatae</taxon>
    </lineage>
</organism>
<sequence length="55" mass="6098">MQILLVVRLVLLWLGGLSAAALGITETAASAHFGTRIGWGKFEQDPNIYYNETQY</sequence>
<protein>
    <recommendedName>
        <fullName>Uncharacterized 6.1 kDa protein</fullName>
    </recommendedName>
</protein>
<gene>
    <name type="ORF">ORF87</name>
</gene>
<evidence type="ECO:0000255" key="1"/>
<reference key="1">
    <citation type="journal article" date="1997" name="Virology">
        <title>The sequence of the Orgyia pseudotsugata multinucleocapsid nuclear polyhedrosis virus genome.</title>
        <authorList>
            <person name="Ahrens C.H."/>
            <person name="Russell R.R."/>
            <person name="Funk C.J."/>
            <person name="Evans J."/>
            <person name="Harwood S."/>
            <person name="Rohrmann G.F."/>
        </authorList>
    </citation>
    <scope>NUCLEOTIDE SEQUENCE [LARGE SCALE GENOMIC DNA]</scope>
</reference>
<organismHost>
    <name type="scientific">Orgyia pseudotsugata</name>
    <name type="common">Douglas-fir tussock moth</name>
    <dbReference type="NCBI Taxonomy" id="33414"/>
</organismHost>
<dbReference type="EMBL" id="U75930">
    <property type="protein sequence ID" value="AAC59086.1"/>
    <property type="molecule type" value="Genomic_DNA"/>
</dbReference>
<dbReference type="RefSeq" id="NP_046243.1">
    <property type="nucleotide sequence ID" value="NC_001875.2"/>
</dbReference>
<dbReference type="KEGG" id="vg:912007"/>
<dbReference type="Proteomes" id="UP000009248">
    <property type="component" value="Genome"/>
</dbReference>
<proteinExistence type="inferred from homology"/>
<name>Y085_NPVOP</name>
<feature type="signal peptide" evidence="1">
    <location>
        <begin position="1"/>
        <end position="19"/>
    </location>
</feature>
<feature type="chain" id="PRO_0000036754" description="Uncharacterized 6.1 kDa protein">
    <location>
        <begin position="20"/>
        <end position="55"/>
    </location>
</feature>
<keyword id="KW-1185">Reference proteome</keyword>
<keyword id="KW-0732">Signal</keyword>